<comment type="function">
    <text evidence="1 2">Involved in the biosynthesis of the antibiotic asukamycin (PubMed:20522559, PubMed:23890006). Catalyzes the conversion of protoasukamycin to 4-hydroxyprotoasukamycin (PubMed:23890006). Can also convert some protoasukamycin derivatives into their corresponding 4-hydroxyprotoasukamycin derivatives (PubMed:23890006). Can also use NADPH, but catalytic efficiency is 50-fold higher with NADH (PubMed:23890006).</text>
</comment>
<comment type="catalytic activity">
    <reaction evidence="2">
        <text>protoasukamycin + NADH + O2 + H(+) = 4-hydroxyprotoasukamycin + NAD(+) + H2O</text>
        <dbReference type="Rhea" id="RHEA:49044"/>
        <dbReference type="ChEBI" id="CHEBI:15377"/>
        <dbReference type="ChEBI" id="CHEBI:15378"/>
        <dbReference type="ChEBI" id="CHEBI:15379"/>
        <dbReference type="ChEBI" id="CHEBI:57540"/>
        <dbReference type="ChEBI" id="CHEBI:57945"/>
        <dbReference type="ChEBI" id="CHEBI:90901"/>
        <dbReference type="ChEBI" id="CHEBI:90902"/>
        <dbReference type="EC" id="1.14.13.215"/>
    </reaction>
    <physiologicalReaction direction="left-to-right" evidence="2">
        <dbReference type="Rhea" id="RHEA:49045"/>
    </physiologicalReaction>
</comment>
<comment type="cofactor">
    <cofactor evidence="2">
        <name>FMN</name>
        <dbReference type="ChEBI" id="CHEBI:58210"/>
    </cofactor>
    <cofactor evidence="2">
        <name>FAD</name>
        <dbReference type="ChEBI" id="CHEBI:57692"/>
    </cofactor>
    <cofactor evidence="2">
        <name>riboflavin</name>
        <dbReference type="ChEBI" id="CHEBI:57986"/>
    </cofactor>
    <text evidence="2">Requires a flavin cofactor. Displays no significant preference, and FMN, FAD and riboflavin can all be used efficiently.</text>
</comment>
<comment type="activity regulation">
    <text evidence="2">When flavin concentration is low, activity is enhanced by the presence of the NADH-dependent flavin reductase AsuE2 (PubMed:23890006). In the presence of abundant flavin, activity of AsuE1 is not affected by AsuE2 (PubMed:23890006).</text>
</comment>
<comment type="biophysicochemical properties">
    <kinetics>
        <KM evidence="2">21.31 uM for protoasukamycin</KM>
        <KM evidence="2">12.62 uM for NADH</KM>
        <KM evidence="2">1840 uM for NADPH</KM>
        <text evidence="2">kcat is 0.183 min(-1) with protoasukamycin as substrate. kcat is 0.113 sec(-1) with NADH as substrate. kcat is 0.324 sec(-1) with NADPH as substrate.</text>
    </kinetics>
</comment>
<comment type="pathway">
    <text evidence="1">Antibiotic biosynthesis.</text>
</comment>
<comment type="subunit">
    <text evidence="2">Does not interact with AsuE2, suggesting a possible transient interaction between the two enzymes instead of formation of a stable complex.</text>
</comment>
<comment type="disruption phenotype">
    <text evidence="1">Mutant does not produce asukamycin and accumulates protoasukamycin.</text>
</comment>
<gene>
    <name evidence="3" type="primary">asuE1</name>
</gene>
<evidence type="ECO:0000269" key="1">
    <source>
    </source>
</evidence>
<evidence type="ECO:0000269" key="2">
    <source>
    </source>
</evidence>
<evidence type="ECO:0000303" key="3">
    <source>
    </source>
</evidence>
<evidence type="ECO:0000303" key="4">
    <source>
    </source>
</evidence>
<evidence type="ECO:0000305" key="5"/>
<reference key="1">
    <citation type="journal article" date="2010" name="J. Biol. Chem.">
        <title>Biochemical and genetic insights into asukamycin biosynthesis.</title>
        <authorList>
            <person name="Rui Z."/>
            <person name="Petrickova K."/>
            <person name="Skanta F."/>
            <person name="Pospisil S."/>
            <person name="Yang Y."/>
            <person name="Chen C.Y."/>
            <person name="Tsai S.F."/>
            <person name="Floss H.G."/>
            <person name="Petricek M."/>
            <person name="Yu T.W."/>
        </authorList>
    </citation>
    <scope>NUCLEOTIDE SEQUENCE [GENOMIC DNA]</scope>
    <scope>FUNCTION</scope>
    <scope>PATHWAY</scope>
    <scope>DISRUPTION PHENOTYPE</scope>
    <source>
        <strain>ATCC 29757 / FERM-P 3429 / AM-1042</strain>
    </source>
</reference>
<reference key="2">
    <citation type="journal article" date="2013" name="Chem. Biol.">
        <title>Tandem enzymatic oxygenations in biosynthesis of epoxyquinone pharmacophore of manumycin-type metabolites.</title>
        <authorList>
            <person name="Rui Z."/>
            <person name="Sandy M."/>
            <person name="Jung B."/>
            <person name="Zhang W."/>
        </authorList>
    </citation>
    <scope>FUNCTION</scope>
    <scope>CATALYTIC ACTIVITY</scope>
    <scope>COFACTOR</scope>
    <scope>ACTIVITY REGULATION</scope>
    <scope>BIOPHYSICOCHEMICAL PROPERTIES</scope>
    <scope>SUBUNIT</scope>
    <source>
        <strain>ATCC 29757 / FERM-P 3429 / AM-1042</strain>
    </source>
</reference>
<feature type="chain" id="PRO_0000457815" description="Protoasukamycin 4-monooxygenase">
    <location>
        <begin position="1"/>
        <end position="407"/>
    </location>
</feature>
<organism>
    <name type="scientific">Streptomyces nodosus subsp. asukaensis</name>
    <dbReference type="NCBI Taxonomy" id="222892"/>
    <lineage>
        <taxon>Bacteria</taxon>
        <taxon>Bacillati</taxon>
        <taxon>Actinomycetota</taxon>
        <taxon>Actinomycetes</taxon>
        <taxon>Kitasatosporales</taxon>
        <taxon>Streptomycetaceae</taxon>
        <taxon>Streptomyces</taxon>
    </lineage>
</organism>
<name>ASUE1_STRNS</name>
<accession>D7P5V0</accession>
<protein>
    <recommendedName>
        <fullName evidence="5">Protoasukamycin 4-monooxygenase</fullName>
        <ecNumber evidence="2">1.14.13.215</ecNumber>
    </recommendedName>
    <alternativeName>
        <fullName evidence="4">Flavin-dependent protoasukamycin hydroxylase</fullName>
    </alternativeName>
</protein>
<proteinExistence type="evidence at protein level"/>
<keyword id="KW-0045">Antibiotic biosynthesis</keyword>
<keyword id="KW-0274">FAD</keyword>
<keyword id="KW-0285">Flavoprotein</keyword>
<keyword id="KW-0288">FMN</keyword>
<keyword id="KW-0503">Monooxygenase</keyword>
<keyword id="KW-0520">NAD</keyword>
<keyword id="KW-0560">Oxidoreductase</keyword>
<sequence>MTTSDPDLSGLETDVCVVGGGATALYGALLCARAGQSVVLVFSQPEFEAAGAGISPLLAPPTLGLLAASGIDEQLTAAGRKVLGVDDHGSTGMLSSWRYADHAGIARPYGLTVPTGTTVQALLAELRAQPRATVLTGEGVVSVEQDDERVVLGFERAAGQDGGVPARRRVAARYAVAADGRQSALRDLVGIRLEVSAFDRPAWLLVAPDVPGRESVLLVRHRAPRALFTIPTPGPSSAVVWAPDRDQEKQLEQGGPAELAEQIKEVDPELSEWLGTVGGRTSPVMRLGFSLWRAPSWRVGRVLLVGESVHGLHTLGGQGLNQSLQGAASAARAIGEALASGDPAAIEDYERVRRPHVERLQDLQWNLQALGYGTAPAVKGAHEDFIDVMTALPPELVAQLDGSDTRA</sequence>
<dbReference type="EC" id="1.14.13.215" evidence="2"/>
<dbReference type="EMBL" id="GQ926890">
    <property type="protein sequence ID" value="ADI58628.1"/>
    <property type="molecule type" value="Genomic_DNA"/>
</dbReference>
<dbReference type="SMR" id="D7P5V0"/>
<dbReference type="KEGG" id="ag:ADI58628"/>
<dbReference type="BioCyc" id="MetaCyc:MONOMER-19677"/>
<dbReference type="BRENDA" id="1.14.13.215">
    <property type="organism ID" value="9020"/>
</dbReference>
<dbReference type="GO" id="GO:0071949">
    <property type="term" value="F:FAD binding"/>
    <property type="evidence" value="ECO:0007669"/>
    <property type="project" value="InterPro"/>
</dbReference>
<dbReference type="GO" id="GO:0004497">
    <property type="term" value="F:monooxygenase activity"/>
    <property type="evidence" value="ECO:0007669"/>
    <property type="project" value="UniProtKB-KW"/>
</dbReference>
<dbReference type="GO" id="GO:0017000">
    <property type="term" value="P:antibiotic biosynthetic process"/>
    <property type="evidence" value="ECO:0007669"/>
    <property type="project" value="UniProtKB-KW"/>
</dbReference>
<dbReference type="Gene3D" id="3.50.50.60">
    <property type="entry name" value="FAD/NAD(P)-binding domain"/>
    <property type="match status" value="2"/>
</dbReference>
<dbReference type="InterPro" id="IPR002938">
    <property type="entry name" value="FAD-bd"/>
</dbReference>
<dbReference type="InterPro" id="IPR036188">
    <property type="entry name" value="FAD/NAD-bd_sf"/>
</dbReference>
<dbReference type="InterPro" id="IPR050631">
    <property type="entry name" value="PheA/TfdB_FAD_monoxygenase"/>
</dbReference>
<dbReference type="PANTHER" id="PTHR43476">
    <property type="entry name" value="3-(3-HYDROXY-PHENYL)PROPIONATE/3-HYDROXYCINNAMIC ACID HYDROXYLASE"/>
    <property type="match status" value="1"/>
</dbReference>
<dbReference type="PANTHER" id="PTHR43476:SF4">
    <property type="entry name" value="BLR0106 PROTEIN"/>
    <property type="match status" value="1"/>
</dbReference>
<dbReference type="Pfam" id="PF01494">
    <property type="entry name" value="FAD_binding_3"/>
    <property type="match status" value="1"/>
</dbReference>
<dbReference type="PRINTS" id="PR00420">
    <property type="entry name" value="RNGMNOXGNASE"/>
</dbReference>
<dbReference type="SUPFAM" id="SSF51905">
    <property type="entry name" value="FAD/NAD(P)-binding domain"/>
    <property type="match status" value="1"/>
</dbReference>